<keyword id="KW-0027">Amidation</keyword>
<keyword id="KW-0044">Antibiotic</keyword>
<keyword id="KW-0929">Antimicrobial</keyword>
<keyword id="KW-0903">Direct protein sequencing</keyword>
<keyword id="KW-0295">Fungicide</keyword>
<keyword id="KW-1213">G-protein coupled receptor impairing toxin</keyword>
<keyword id="KW-0391">Immunity</keyword>
<keyword id="KW-0399">Innate immunity</keyword>
<keyword id="KW-0467">Mast cell degranulation</keyword>
<keyword id="KW-0964">Secreted</keyword>
<keyword id="KW-0800">Toxin</keyword>
<evidence type="ECO:0000250" key="1">
    <source>
        <dbReference type="UniProtKB" id="P01514"/>
    </source>
</evidence>
<evidence type="ECO:0000250" key="2">
    <source>
        <dbReference type="UniProtKB" id="P0C1Q8"/>
    </source>
</evidence>
<evidence type="ECO:0000250" key="3">
    <source>
        <dbReference type="UniProtKB" id="P84914"/>
    </source>
</evidence>
<evidence type="ECO:0000269" key="4">
    <source>
    </source>
</evidence>
<evidence type="ECO:0000303" key="5">
    <source>
    </source>
</evidence>
<evidence type="ECO:0000305" key="6"/>
<evidence type="ECO:0000305" key="7">
    <source>
    </source>
</evidence>
<name>MAST2_VESVU</name>
<protein>
    <recommendedName>
        <fullName evidence="5">Mastoparan-V2</fullName>
    </recommendedName>
</protein>
<proteinExistence type="evidence at protein level"/>
<comment type="function">
    <text evidence="1 2 3">Antimicrobial peptide with high activity on Gram-positive (S.mutans, and S.aureus), and Gram-negative bacteria (S.enterica), as well as on fungi (C.albicans, C.glabrata, and C.neoformans). Shows a potent hemolysis on human erythrocytes. Together with phospholipase A1, stimulates prostaglandin E2 release from murine peritoneal cells and macrophages (By similarity). Its mast cell degranulation activity may be related to the activation of G-protein coupled receptors in mast cells as well as interaction with other proteins located in cell endosomal membranes in the mast cells (By similarity).</text>
</comment>
<comment type="subcellular location">
    <subcellularLocation>
        <location evidence="4">Secreted</location>
    </subcellularLocation>
</comment>
<comment type="tissue specificity">
    <text evidence="7">Expressed by the venom gland.</text>
</comment>
<comment type="similarity">
    <text evidence="6">Belongs to the MCD family. Mastoparan subfamily.</text>
</comment>
<dbReference type="GO" id="GO:0005576">
    <property type="term" value="C:extracellular region"/>
    <property type="evidence" value="ECO:0007669"/>
    <property type="project" value="UniProtKB-SubCell"/>
</dbReference>
<dbReference type="GO" id="GO:0090729">
    <property type="term" value="F:toxin activity"/>
    <property type="evidence" value="ECO:0007669"/>
    <property type="project" value="UniProtKB-KW"/>
</dbReference>
<dbReference type="GO" id="GO:0042742">
    <property type="term" value="P:defense response to bacterium"/>
    <property type="evidence" value="ECO:0007669"/>
    <property type="project" value="UniProtKB-KW"/>
</dbReference>
<dbReference type="GO" id="GO:0050832">
    <property type="term" value="P:defense response to fungus"/>
    <property type="evidence" value="ECO:0007669"/>
    <property type="project" value="UniProtKB-KW"/>
</dbReference>
<dbReference type="GO" id="GO:0045087">
    <property type="term" value="P:innate immune response"/>
    <property type="evidence" value="ECO:0007669"/>
    <property type="project" value="UniProtKB-KW"/>
</dbReference>
<dbReference type="GO" id="GO:0031640">
    <property type="term" value="P:killing of cells of another organism"/>
    <property type="evidence" value="ECO:0007669"/>
    <property type="project" value="UniProtKB-KW"/>
</dbReference>
<feature type="peptide" id="PRO_0000247268" description="Mastoparan-V2" evidence="4">
    <location>
        <begin position="1"/>
        <end position="15"/>
    </location>
</feature>
<feature type="modified residue" description="Serine amide" evidence="4">
    <location>
        <position position="15"/>
    </location>
</feature>
<sequence>INWKKIKSLIKAAMS</sequence>
<accession>P0C1Q9</accession>
<organism>
    <name type="scientific">Vespula vulgaris</name>
    <name type="common">Yellow jacket</name>
    <name type="synonym">Wasp</name>
    <dbReference type="NCBI Taxonomy" id="7454"/>
    <lineage>
        <taxon>Eukaryota</taxon>
        <taxon>Metazoa</taxon>
        <taxon>Ecdysozoa</taxon>
        <taxon>Arthropoda</taxon>
        <taxon>Hexapoda</taxon>
        <taxon>Insecta</taxon>
        <taxon>Pterygota</taxon>
        <taxon>Neoptera</taxon>
        <taxon>Endopterygota</taxon>
        <taxon>Hymenoptera</taxon>
        <taxon>Apocrita</taxon>
        <taxon>Aculeata</taxon>
        <taxon>Vespoidea</taxon>
        <taxon>Vespidae</taxon>
        <taxon>Vespinae</taxon>
        <taxon>Vespula</taxon>
    </lineage>
</organism>
<reference key="1">
    <citation type="journal article" date="2003" name="Int. Arch. Allergy Immunol.">
        <title>Inflammatory role of two venom components of yellow jackets (Vespula vulgaris): a mast cell degranulating peptide mastoparan and phospholipase A1.</title>
        <authorList>
            <person name="King T.P."/>
            <person name="Jim S.Y."/>
            <person name="Wittkowski K.M."/>
        </authorList>
    </citation>
    <scope>PROTEIN SEQUENCE</scope>
    <scope>SUBCELLULAR LOCATION</scope>
    <scope>AMIDATION AT SER-15</scope>
    <source>
        <tissue>Venom</tissue>
    </source>
</reference>